<proteinExistence type="inferred from homology"/>
<gene>
    <name evidence="1" type="primary">tmk</name>
    <name type="ordered locus">Ddes_0128</name>
</gene>
<protein>
    <recommendedName>
        <fullName evidence="1">Thymidylate kinase</fullName>
        <ecNumber evidence="1">2.7.4.9</ecNumber>
    </recommendedName>
    <alternativeName>
        <fullName evidence="1">dTMP kinase</fullName>
    </alternativeName>
</protein>
<feature type="chain" id="PRO_1000123568" description="Thymidylate kinase">
    <location>
        <begin position="1"/>
        <end position="217"/>
    </location>
</feature>
<feature type="binding site" evidence="1">
    <location>
        <begin position="7"/>
        <end position="14"/>
    </location>
    <ligand>
        <name>ATP</name>
        <dbReference type="ChEBI" id="CHEBI:30616"/>
    </ligand>
</feature>
<evidence type="ECO:0000255" key="1">
    <source>
        <dbReference type="HAMAP-Rule" id="MF_00165"/>
    </source>
</evidence>
<sequence>MFVTFEGIEGAGKSTAIDYLSDYLQARGHDPVLTREPGGSALGRRLRALLLDVRTGGLASRAELFLFLADRAQHVTEVIRPALEAGQVVLCDRFTDSTLAYQGYGRGLDTEYLRSLNTAATGGLEPDLTLLLDLPVRCGLERAGERNRSAGMVIAEGRFDSESLDFHERVRRGYRALAEEEPERFAIIDASQPPEDVVLQCRSAIEAYLRRRGRGLD</sequence>
<comment type="function">
    <text evidence="1">Phosphorylation of dTMP to form dTDP in both de novo and salvage pathways of dTTP synthesis.</text>
</comment>
<comment type="catalytic activity">
    <reaction evidence="1">
        <text>dTMP + ATP = dTDP + ADP</text>
        <dbReference type="Rhea" id="RHEA:13517"/>
        <dbReference type="ChEBI" id="CHEBI:30616"/>
        <dbReference type="ChEBI" id="CHEBI:58369"/>
        <dbReference type="ChEBI" id="CHEBI:63528"/>
        <dbReference type="ChEBI" id="CHEBI:456216"/>
        <dbReference type="EC" id="2.7.4.9"/>
    </reaction>
</comment>
<comment type="similarity">
    <text evidence="1">Belongs to the thymidylate kinase family.</text>
</comment>
<keyword id="KW-0067">ATP-binding</keyword>
<keyword id="KW-0418">Kinase</keyword>
<keyword id="KW-0545">Nucleotide biosynthesis</keyword>
<keyword id="KW-0547">Nucleotide-binding</keyword>
<keyword id="KW-0808">Transferase</keyword>
<reference key="1">
    <citation type="submission" date="2009-01" db="EMBL/GenBank/DDBJ databases">
        <title>Complete sequence of Desulfovibrio desulfuricans subsp. desulfuricans str. ATCC 27774.</title>
        <authorList>
            <consortium name="US DOE Joint Genome Institute"/>
            <person name="Lucas S."/>
            <person name="Copeland A."/>
            <person name="Lapidus A."/>
            <person name="Glavina del Rio T."/>
            <person name="Tice H."/>
            <person name="Bruce D."/>
            <person name="Goodwin L."/>
            <person name="Pitluck S."/>
            <person name="Sims D."/>
            <person name="Lu M."/>
            <person name="Kiss H."/>
            <person name="Meineke L."/>
            <person name="Brettin T."/>
            <person name="Detter J.C."/>
            <person name="Han C."/>
            <person name="Larimer F."/>
            <person name="Land M."/>
            <person name="Hauser L."/>
            <person name="Kyrpides N."/>
            <person name="Ovchinnikova G."/>
            <person name="Hazen T.C."/>
        </authorList>
    </citation>
    <scope>NUCLEOTIDE SEQUENCE [LARGE SCALE GENOMIC DNA]</scope>
    <source>
        <strain>ATCC 27774 / DSM 6949 / MB</strain>
    </source>
</reference>
<name>KTHY_DESDA</name>
<accession>B8J2G0</accession>
<organism>
    <name type="scientific">Desulfovibrio desulfuricans (strain ATCC 27774 / DSM 6949 / MB)</name>
    <dbReference type="NCBI Taxonomy" id="525146"/>
    <lineage>
        <taxon>Bacteria</taxon>
        <taxon>Pseudomonadati</taxon>
        <taxon>Thermodesulfobacteriota</taxon>
        <taxon>Desulfovibrionia</taxon>
        <taxon>Desulfovibrionales</taxon>
        <taxon>Desulfovibrionaceae</taxon>
        <taxon>Desulfovibrio</taxon>
    </lineage>
</organism>
<dbReference type="EC" id="2.7.4.9" evidence="1"/>
<dbReference type="EMBL" id="CP001358">
    <property type="protein sequence ID" value="ACL48048.1"/>
    <property type="molecule type" value="Genomic_DNA"/>
</dbReference>
<dbReference type="SMR" id="B8J2G0"/>
<dbReference type="STRING" id="525146.Ddes_0128"/>
<dbReference type="KEGG" id="dds:Ddes_0128"/>
<dbReference type="eggNOG" id="COG0125">
    <property type="taxonomic scope" value="Bacteria"/>
</dbReference>
<dbReference type="HOGENOM" id="CLU_049131_0_2_7"/>
<dbReference type="GO" id="GO:0005829">
    <property type="term" value="C:cytosol"/>
    <property type="evidence" value="ECO:0007669"/>
    <property type="project" value="TreeGrafter"/>
</dbReference>
<dbReference type="GO" id="GO:0005524">
    <property type="term" value="F:ATP binding"/>
    <property type="evidence" value="ECO:0007669"/>
    <property type="project" value="UniProtKB-UniRule"/>
</dbReference>
<dbReference type="GO" id="GO:0004798">
    <property type="term" value="F:dTMP kinase activity"/>
    <property type="evidence" value="ECO:0007669"/>
    <property type="project" value="UniProtKB-UniRule"/>
</dbReference>
<dbReference type="GO" id="GO:0006233">
    <property type="term" value="P:dTDP biosynthetic process"/>
    <property type="evidence" value="ECO:0007669"/>
    <property type="project" value="InterPro"/>
</dbReference>
<dbReference type="GO" id="GO:0006235">
    <property type="term" value="P:dTTP biosynthetic process"/>
    <property type="evidence" value="ECO:0007669"/>
    <property type="project" value="UniProtKB-UniRule"/>
</dbReference>
<dbReference type="GO" id="GO:0006227">
    <property type="term" value="P:dUDP biosynthetic process"/>
    <property type="evidence" value="ECO:0007669"/>
    <property type="project" value="TreeGrafter"/>
</dbReference>
<dbReference type="CDD" id="cd01672">
    <property type="entry name" value="TMPK"/>
    <property type="match status" value="1"/>
</dbReference>
<dbReference type="FunFam" id="3.40.50.300:FF:000225">
    <property type="entry name" value="Thymidylate kinase"/>
    <property type="match status" value="1"/>
</dbReference>
<dbReference type="Gene3D" id="3.40.50.300">
    <property type="entry name" value="P-loop containing nucleotide triphosphate hydrolases"/>
    <property type="match status" value="1"/>
</dbReference>
<dbReference type="HAMAP" id="MF_00165">
    <property type="entry name" value="Thymidylate_kinase"/>
    <property type="match status" value="1"/>
</dbReference>
<dbReference type="InterPro" id="IPR027417">
    <property type="entry name" value="P-loop_NTPase"/>
</dbReference>
<dbReference type="InterPro" id="IPR039430">
    <property type="entry name" value="Thymidylate_kin-like_dom"/>
</dbReference>
<dbReference type="InterPro" id="IPR018095">
    <property type="entry name" value="Thymidylate_kin_CS"/>
</dbReference>
<dbReference type="InterPro" id="IPR018094">
    <property type="entry name" value="Thymidylate_kinase"/>
</dbReference>
<dbReference type="NCBIfam" id="TIGR00041">
    <property type="entry name" value="DTMP_kinase"/>
    <property type="match status" value="1"/>
</dbReference>
<dbReference type="PANTHER" id="PTHR10344">
    <property type="entry name" value="THYMIDYLATE KINASE"/>
    <property type="match status" value="1"/>
</dbReference>
<dbReference type="PANTHER" id="PTHR10344:SF4">
    <property type="entry name" value="UMP-CMP KINASE 2, MITOCHONDRIAL"/>
    <property type="match status" value="1"/>
</dbReference>
<dbReference type="Pfam" id="PF02223">
    <property type="entry name" value="Thymidylate_kin"/>
    <property type="match status" value="1"/>
</dbReference>
<dbReference type="SUPFAM" id="SSF52540">
    <property type="entry name" value="P-loop containing nucleoside triphosphate hydrolases"/>
    <property type="match status" value="1"/>
</dbReference>
<dbReference type="PROSITE" id="PS01331">
    <property type="entry name" value="THYMIDYLATE_KINASE"/>
    <property type="match status" value="1"/>
</dbReference>